<accession>O22611</accession>
<gene>
    <name evidence="3" type="primary">DRM1</name>
</gene>
<reference key="1">
    <citation type="journal article" date="1998" name="Planta">
        <title>Dormancy-associated gene expression in pea axillary buds. Cloning and expression of PsDRM1 and PsDRM2.</title>
        <authorList>
            <person name="Stafstrom J.P."/>
            <person name="Ripley B.D."/>
            <person name="Devitt M.L."/>
            <person name="Drake B."/>
        </authorList>
    </citation>
    <scope>NUCLEOTIDE SEQUENCE [MRNA]</scope>
    <scope>TISSUE SPECIFICITY</scope>
    <scope>INDUCTION BY DECAPITATION</scope>
    <source>
        <strain>cv. Alaska</strain>
    </source>
</reference>
<feature type="chain" id="PRO_0000436084" description="Dormancy-associated protein 1">
    <location>
        <begin position="1"/>
        <end position="111"/>
    </location>
</feature>
<feature type="region of interest" description="Disordered" evidence="1">
    <location>
        <begin position="30"/>
        <end position="60"/>
    </location>
</feature>
<feature type="compositionally biased region" description="Low complexity" evidence="1">
    <location>
        <begin position="41"/>
        <end position="59"/>
    </location>
</feature>
<sequence>MLDKLWDDIVAGPQPERGLEKLRKLTTTLKDDGASNQLMRSTSIPTTPTTPVTPTTPSSARKVDNVWRSVFNPGSNSATKSIGAHVFDKPLPNTPTVYDWMYSGDTRSKHR</sequence>
<dbReference type="EMBL" id="AF029242">
    <property type="protein sequence ID" value="AAB84193.1"/>
    <property type="molecule type" value="mRNA"/>
</dbReference>
<dbReference type="PIR" id="T06255">
    <property type="entry name" value="T06255"/>
</dbReference>
<dbReference type="EnsemblPlants" id="Psat1g203680.1">
    <property type="protein sequence ID" value="Psat1g203680.1.cds"/>
    <property type="gene ID" value="Psat1g203680"/>
</dbReference>
<dbReference type="Gramene" id="Psat1g203680.1">
    <property type="protein sequence ID" value="Psat1g203680.1.cds"/>
    <property type="gene ID" value="Psat1g203680"/>
</dbReference>
<dbReference type="InterPro" id="IPR008406">
    <property type="entry name" value="DRM/ARP"/>
</dbReference>
<dbReference type="PANTHER" id="PTHR33565">
    <property type="entry name" value="DORMANCY-ASSOCIATED PROTEIN 1"/>
    <property type="match status" value="1"/>
</dbReference>
<dbReference type="PANTHER" id="PTHR33565:SF2">
    <property type="entry name" value="DORMANCY-ASSOCIATED PROTEIN 1"/>
    <property type="match status" value="1"/>
</dbReference>
<dbReference type="Pfam" id="PF05564">
    <property type="entry name" value="Auxin_repressed"/>
    <property type="match status" value="1"/>
</dbReference>
<name>DRM1_PEA</name>
<protein>
    <recommendedName>
        <fullName evidence="3">Dormancy-associated protein 1</fullName>
        <shortName evidence="3">PsDRM1</shortName>
    </recommendedName>
</protein>
<keyword id="KW-0217">Developmental protein</keyword>
<organism evidence="5">
    <name type="scientific">Pisum sativum</name>
    <name type="common">Garden pea</name>
    <name type="synonym">Lathyrus oleraceus</name>
    <dbReference type="NCBI Taxonomy" id="3888"/>
    <lineage>
        <taxon>Eukaryota</taxon>
        <taxon>Viridiplantae</taxon>
        <taxon>Streptophyta</taxon>
        <taxon>Embryophyta</taxon>
        <taxon>Tracheophyta</taxon>
        <taxon>Spermatophyta</taxon>
        <taxon>Magnoliopsida</taxon>
        <taxon>eudicotyledons</taxon>
        <taxon>Gunneridae</taxon>
        <taxon>Pentapetalae</taxon>
        <taxon>rosids</taxon>
        <taxon>fabids</taxon>
        <taxon>Fabales</taxon>
        <taxon>Fabaceae</taxon>
        <taxon>Papilionoideae</taxon>
        <taxon>50 kb inversion clade</taxon>
        <taxon>NPAAA clade</taxon>
        <taxon>Hologalegina</taxon>
        <taxon>IRL clade</taxon>
        <taxon>Fabeae</taxon>
        <taxon>Pisum</taxon>
    </lineage>
</organism>
<proteinExistence type="evidence at transcript level"/>
<comment type="tissue specificity">
    <text evidence="2">Expressed in axilary buds and in non-growing stems and roots. Detected in sepals, stamens and carpels, but barely detected in petals or leaflets.</text>
</comment>
<comment type="induction">
    <text evidence="2">Strongly down-regulated in axillary buds within 6 hours after decapitation and then up-regulated.</text>
</comment>
<comment type="similarity">
    <text evidence="4">Belongs to the DRM1/ARP family.</text>
</comment>
<evidence type="ECO:0000256" key="1">
    <source>
        <dbReference type="SAM" id="MobiDB-lite"/>
    </source>
</evidence>
<evidence type="ECO:0000269" key="2">
    <source>
    </source>
</evidence>
<evidence type="ECO:0000303" key="3">
    <source>
    </source>
</evidence>
<evidence type="ECO:0000305" key="4"/>
<evidence type="ECO:0000312" key="5">
    <source>
        <dbReference type="EMBL" id="AAB84193.1"/>
    </source>
</evidence>